<organism>
    <name type="scientific">Thermoanaerobacter sp. (strain X514)</name>
    <dbReference type="NCBI Taxonomy" id="399726"/>
    <lineage>
        <taxon>Bacteria</taxon>
        <taxon>Bacillati</taxon>
        <taxon>Bacillota</taxon>
        <taxon>Clostridia</taxon>
        <taxon>Thermoanaerobacterales</taxon>
        <taxon>Thermoanaerobacteraceae</taxon>
        <taxon>Thermoanaerobacter</taxon>
    </lineage>
</organism>
<reference key="1">
    <citation type="submission" date="2008-01" db="EMBL/GenBank/DDBJ databases">
        <title>Complete sequence of Thermoanaerobacter sp. X514.</title>
        <authorList>
            <consortium name="US DOE Joint Genome Institute"/>
            <person name="Copeland A."/>
            <person name="Lucas S."/>
            <person name="Lapidus A."/>
            <person name="Barry K."/>
            <person name="Glavina del Rio T."/>
            <person name="Dalin E."/>
            <person name="Tice H."/>
            <person name="Pitluck S."/>
            <person name="Bruce D."/>
            <person name="Goodwin L."/>
            <person name="Saunders E."/>
            <person name="Brettin T."/>
            <person name="Detter J.C."/>
            <person name="Han C."/>
            <person name="Schmutz J."/>
            <person name="Larimer F."/>
            <person name="Land M."/>
            <person name="Hauser L."/>
            <person name="Kyrpides N."/>
            <person name="Kim E."/>
            <person name="Hemme C."/>
            <person name="Fields M.W."/>
            <person name="He Z."/>
            <person name="Zhou J."/>
            <person name="Richardson P."/>
        </authorList>
    </citation>
    <scope>NUCLEOTIDE SEQUENCE [LARGE SCALE GENOMIC DNA]</scope>
    <source>
        <strain>X514</strain>
    </source>
</reference>
<name>CLPP_THEPX</name>
<feature type="chain" id="PRO_1000124719" description="ATP-dependent Clp protease proteolytic subunit">
    <location>
        <begin position="1"/>
        <end position="195"/>
    </location>
</feature>
<feature type="active site" description="Nucleophile" evidence="1">
    <location>
        <position position="98"/>
    </location>
</feature>
<feature type="active site" evidence="1">
    <location>
        <position position="123"/>
    </location>
</feature>
<proteinExistence type="inferred from homology"/>
<comment type="function">
    <text evidence="1">Cleaves peptides in various proteins in a process that requires ATP hydrolysis. Has a chymotrypsin-like activity. Plays a major role in the degradation of misfolded proteins.</text>
</comment>
<comment type="catalytic activity">
    <reaction evidence="1">
        <text>Hydrolysis of proteins to small peptides in the presence of ATP and magnesium. alpha-casein is the usual test substrate. In the absence of ATP, only oligopeptides shorter than five residues are hydrolyzed (such as succinyl-Leu-Tyr-|-NHMec, and Leu-Tyr-Leu-|-Tyr-Trp, in which cleavage of the -Tyr-|-Leu- and -Tyr-|-Trp bonds also occurs).</text>
        <dbReference type="EC" id="3.4.21.92"/>
    </reaction>
</comment>
<comment type="subunit">
    <text evidence="1">Fourteen ClpP subunits assemble into 2 heptameric rings which stack back to back to give a disk-like structure with a central cavity, resembling the structure of eukaryotic proteasomes.</text>
</comment>
<comment type="subcellular location">
    <subcellularLocation>
        <location evidence="1">Cytoplasm</location>
    </subcellularLocation>
</comment>
<comment type="similarity">
    <text evidence="1">Belongs to the peptidase S14 family.</text>
</comment>
<accession>B0K533</accession>
<evidence type="ECO:0000255" key="1">
    <source>
        <dbReference type="HAMAP-Rule" id="MF_00444"/>
    </source>
</evidence>
<sequence length="195" mass="21691">MSLVPIVVEQTNRGERSYDIFSRLLKDRIVFLGEEINDTTASLVIAQLLFLEAEDPDKDIWLYINSPGGSITAGFAIYDTMQYIKPDVVTLCVGMAASMAAFLLAAGAKGKRFALPNSEIMIHQPLGGMQGQATDIKIHAERILKLRDKLDKILAENTGQPIEKIKADTERDFFMDAEDAKAYGIIDEVLIRNKR</sequence>
<dbReference type="EC" id="3.4.21.92" evidence="1"/>
<dbReference type="EMBL" id="CP000923">
    <property type="protein sequence ID" value="ABY93564.1"/>
    <property type="molecule type" value="Genomic_DNA"/>
</dbReference>
<dbReference type="RefSeq" id="WP_003868372.1">
    <property type="nucleotide sequence ID" value="NC_010320.1"/>
</dbReference>
<dbReference type="SMR" id="B0K533"/>
<dbReference type="MEROPS" id="S14.001"/>
<dbReference type="KEGG" id="tex:Teth514_2301"/>
<dbReference type="HOGENOM" id="CLU_058707_3_2_9"/>
<dbReference type="Proteomes" id="UP000002155">
    <property type="component" value="Chromosome"/>
</dbReference>
<dbReference type="GO" id="GO:0005737">
    <property type="term" value="C:cytoplasm"/>
    <property type="evidence" value="ECO:0007669"/>
    <property type="project" value="UniProtKB-SubCell"/>
</dbReference>
<dbReference type="GO" id="GO:0009368">
    <property type="term" value="C:endopeptidase Clp complex"/>
    <property type="evidence" value="ECO:0007669"/>
    <property type="project" value="TreeGrafter"/>
</dbReference>
<dbReference type="GO" id="GO:0004176">
    <property type="term" value="F:ATP-dependent peptidase activity"/>
    <property type="evidence" value="ECO:0007669"/>
    <property type="project" value="InterPro"/>
</dbReference>
<dbReference type="GO" id="GO:0051117">
    <property type="term" value="F:ATPase binding"/>
    <property type="evidence" value="ECO:0007669"/>
    <property type="project" value="TreeGrafter"/>
</dbReference>
<dbReference type="GO" id="GO:0004252">
    <property type="term" value="F:serine-type endopeptidase activity"/>
    <property type="evidence" value="ECO:0007669"/>
    <property type="project" value="UniProtKB-UniRule"/>
</dbReference>
<dbReference type="GO" id="GO:0006515">
    <property type="term" value="P:protein quality control for misfolded or incompletely synthesized proteins"/>
    <property type="evidence" value="ECO:0007669"/>
    <property type="project" value="TreeGrafter"/>
</dbReference>
<dbReference type="CDD" id="cd07017">
    <property type="entry name" value="S14_ClpP_2"/>
    <property type="match status" value="1"/>
</dbReference>
<dbReference type="FunFam" id="3.90.226.10:FF:000001">
    <property type="entry name" value="ATP-dependent Clp protease proteolytic subunit"/>
    <property type="match status" value="1"/>
</dbReference>
<dbReference type="Gene3D" id="3.90.226.10">
    <property type="entry name" value="2-enoyl-CoA Hydratase, Chain A, domain 1"/>
    <property type="match status" value="1"/>
</dbReference>
<dbReference type="HAMAP" id="MF_00444">
    <property type="entry name" value="ClpP"/>
    <property type="match status" value="1"/>
</dbReference>
<dbReference type="InterPro" id="IPR001907">
    <property type="entry name" value="ClpP"/>
</dbReference>
<dbReference type="InterPro" id="IPR029045">
    <property type="entry name" value="ClpP/crotonase-like_dom_sf"/>
</dbReference>
<dbReference type="InterPro" id="IPR023562">
    <property type="entry name" value="ClpP/TepA"/>
</dbReference>
<dbReference type="InterPro" id="IPR033135">
    <property type="entry name" value="ClpP_His_AS"/>
</dbReference>
<dbReference type="InterPro" id="IPR018215">
    <property type="entry name" value="ClpP_Ser_AS"/>
</dbReference>
<dbReference type="NCBIfam" id="TIGR00493">
    <property type="entry name" value="clpP"/>
    <property type="match status" value="1"/>
</dbReference>
<dbReference type="NCBIfam" id="NF001368">
    <property type="entry name" value="PRK00277.1"/>
    <property type="match status" value="1"/>
</dbReference>
<dbReference type="NCBIfam" id="NF009205">
    <property type="entry name" value="PRK12553.1"/>
    <property type="match status" value="1"/>
</dbReference>
<dbReference type="PANTHER" id="PTHR10381">
    <property type="entry name" value="ATP-DEPENDENT CLP PROTEASE PROTEOLYTIC SUBUNIT"/>
    <property type="match status" value="1"/>
</dbReference>
<dbReference type="PANTHER" id="PTHR10381:SF70">
    <property type="entry name" value="ATP-DEPENDENT CLP PROTEASE PROTEOLYTIC SUBUNIT"/>
    <property type="match status" value="1"/>
</dbReference>
<dbReference type="Pfam" id="PF00574">
    <property type="entry name" value="CLP_protease"/>
    <property type="match status" value="1"/>
</dbReference>
<dbReference type="PRINTS" id="PR00127">
    <property type="entry name" value="CLPPROTEASEP"/>
</dbReference>
<dbReference type="SUPFAM" id="SSF52096">
    <property type="entry name" value="ClpP/crotonase"/>
    <property type="match status" value="1"/>
</dbReference>
<dbReference type="PROSITE" id="PS00382">
    <property type="entry name" value="CLP_PROTEASE_HIS"/>
    <property type="match status" value="1"/>
</dbReference>
<dbReference type="PROSITE" id="PS00381">
    <property type="entry name" value="CLP_PROTEASE_SER"/>
    <property type="match status" value="1"/>
</dbReference>
<gene>
    <name evidence="1" type="primary">clpP</name>
    <name type="ordered locus">Teth514_2301</name>
</gene>
<keyword id="KW-0963">Cytoplasm</keyword>
<keyword id="KW-0378">Hydrolase</keyword>
<keyword id="KW-0645">Protease</keyword>
<keyword id="KW-0720">Serine protease</keyword>
<protein>
    <recommendedName>
        <fullName evidence="1">ATP-dependent Clp protease proteolytic subunit</fullName>
        <ecNumber evidence="1">3.4.21.92</ecNumber>
    </recommendedName>
    <alternativeName>
        <fullName evidence="1">Endopeptidase Clp</fullName>
    </alternativeName>
</protein>